<name>UTP25_NEUCR</name>
<protein>
    <recommendedName>
        <fullName>U3 small nucleolar RNA-associated protein 25</fullName>
        <shortName>U3 snoRNA-associated protein 25</shortName>
    </recommendedName>
    <alternativeName>
        <fullName>U three protein 25</fullName>
    </alternativeName>
</protein>
<keyword id="KW-0539">Nucleus</keyword>
<keyword id="KW-1185">Reference proteome</keyword>
<keyword id="KW-0687">Ribonucleoprotein</keyword>
<keyword id="KW-0690">Ribosome biogenesis</keyword>
<keyword id="KW-0698">rRNA processing</keyword>
<evidence type="ECO:0000250" key="1"/>
<evidence type="ECO:0000256" key="2">
    <source>
        <dbReference type="SAM" id="MobiDB-lite"/>
    </source>
</evidence>
<evidence type="ECO:0000305" key="3"/>
<organism>
    <name type="scientific">Neurospora crassa (strain ATCC 24698 / 74-OR23-1A / CBS 708.71 / DSM 1257 / FGSC 987)</name>
    <dbReference type="NCBI Taxonomy" id="367110"/>
    <lineage>
        <taxon>Eukaryota</taxon>
        <taxon>Fungi</taxon>
        <taxon>Dikarya</taxon>
        <taxon>Ascomycota</taxon>
        <taxon>Pezizomycotina</taxon>
        <taxon>Sordariomycetes</taxon>
        <taxon>Sordariomycetidae</taxon>
        <taxon>Sordariales</taxon>
        <taxon>Sordariaceae</taxon>
        <taxon>Neurospora</taxon>
    </lineage>
</organism>
<proteinExistence type="inferred from homology"/>
<reference key="1">
    <citation type="journal article" date="2003" name="Nucleic Acids Res.">
        <title>What's in the genome of a filamentous fungus? Analysis of the Neurospora genome sequence.</title>
        <authorList>
            <person name="Mannhaupt G."/>
            <person name="Montrone C."/>
            <person name="Haase D."/>
            <person name="Mewes H.-W."/>
            <person name="Aign V."/>
            <person name="Hoheisel J.D."/>
            <person name="Fartmann B."/>
            <person name="Nyakatura G."/>
            <person name="Kempken F."/>
            <person name="Maier J."/>
            <person name="Schulte U."/>
        </authorList>
    </citation>
    <scope>NUCLEOTIDE SEQUENCE [LARGE SCALE GENOMIC DNA]</scope>
    <source>
        <strain>ATCC 24698 / 74-OR23-1A / CBS 708.71 / DSM 1257 / FGSC 987</strain>
    </source>
</reference>
<reference key="2">
    <citation type="journal article" date="2003" name="Nature">
        <title>The genome sequence of the filamentous fungus Neurospora crassa.</title>
        <authorList>
            <person name="Galagan J.E."/>
            <person name="Calvo S.E."/>
            <person name="Borkovich K.A."/>
            <person name="Selker E.U."/>
            <person name="Read N.D."/>
            <person name="Jaffe D.B."/>
            <person name="FitzHugh W."/>
            <person name="Ma L.-J."/>
            <person name="Smirnov S."/>
            <person name="Purcell S."/>
            <person name="Rehman B."/>
            <person name="Elkins T."/>
            <person name="Engels R."/>
            <person name="Wang S."/>
            <person name="Nielsen C.B."/>
            <person name="Butler J."/>
            <person name="Endrizzi M."/>
            <person name="Qui D."/>
            <person name="Ianakiev P."/>
            <person name="Bell-Pedersen D."/>
            <person name="Nelson M.A."/>
            <person name="Werner-Washburne M."/>
            <person name="Selitrennikoff C.P."/>
            <person name="Kinsey J.A."/>
            <person name="Braun E.L."/>
            <person name="Zelter A."/>
            <person name="Schulte U."/>
            <person name="Kothe G.O."/>
            <person name="Jedd G."/>
            <person name="Mewes H.-W."/>
            <person name="Staben C."/>
            <person name="Marcotte E."/>
            <person name="Greenberg D."/>
            <person name="Roy A."/>
            <person name="Foley K."/>
            <person name="Naylor J."/>
            <person name="Stange-Thomann N."/>
            <person name="Barrett R."/>
            <person name="Gnerre S."/>
            <person name="Kamal M."/>
            <person name="Kamvysselis M."/>
            <person name="Mauceli E.W."/>
            <person name="Bielke C."/>
            <person name="Rudd S."/>
            <person name="Frishman D."/>
            <person name="Krystofova S."/>
            <person name="Rasmussen C."/>
            <person name="Metzenberg R.L."/>
            <person name="Perkins D.D."/>
            <person name="Kroken S."/>
            <person name="Cogoni C."/>
            <person name="Macino G."/>
            <person name="Catcheside D.E.A."/>
            <person name="Li W."/>
            <person name="Pratt R.J."/>
            <person name="Osmani S.A."/>
            <person name="DeSouza C.P.C."/>
            <person name="Glass N.L."/>
            <person name="Orbach M.J."/>
            <person name="Berglund J.A."/>
            <person name="Voelker R."/>
            <person name="Yarden O."/>
            <person name="Plamann M."/>
            <person name="Seiler S."/>
            <person name="Dunlap J.C."/>
            <person name="Radford A."/>
            <person name="Aramayo R."/>
            <person name="Natvig D.O."/>
            <person name="Alex L.A."/>
            <person name="Mannhaupt G."/>
            <person name="Ebbole D.J."/>
            <person name="Freitag M."/>
            <person name="Paulsen I."/>
            <person name="Sachs M.S."/>
            <person name="Lander E.S."/>
            <person name="Nusbaum C."/>
            <person name="Birren B.W."/>
        </authorList>
    </citation>
    <scope>NUCLEOTIDE SEQUENCE [LARGE SCALE GENOMIC DNA]</scope>
    <source>
        <strain>ATCC 24698 / 74-OR23-1A / CBS 708.71 / DSM 1257 / FGSC 987</strain>
    </source>
</reference>
<dbReference type="EMBL" id="AL353817">
    <property type="protein sequence ID" value="CAB88516.2"/>
    <property type="molecule type" value="Genomic_DNA"/>
</dbReference>
<dbReference type="EMBL" id="CM002240">
    <property type="protein sequence ID" value="EAA32398.1"/>
    <property type="molecule type" value="Genomic_DNA"/>
</dbReference>
<dbReference type="PIR" id="T48719">
    <property type="entry name" value="T48719"/>
</dbReference>
<dbReference type="RefSeq" id="XP_961634.1">
    <property type="nucleotide sequence ID" value="XM_956541.2"/>
</dbReference>
<dbReference type="FunCoup" id="Q9P749">
    <property type="interactions" value="1193"/>
</dbReference>
<dbReference type="STRING" id="367110.Q9P749"/>
<dbReference type="PaxDb" id="5141-EFNCRP00000004408"/>
<dbReference type="EnsemblFungi" id="EAA32398">
    <property type="protein sequence ID" value="EAA32398"/>
    <property type="gene ID" value="NCU01022"/>
</dbReference>
<dbReference type="GeneID" id="3877809"/>
<dbReference type="KEGG" id="ncr:NCU01022"/>
<dbReference type="VEuPathDB" id="FungiDB:NCU01022"/>
<dbReference type="HOGENOM" id="CLU_018705_0_1_1"/>
<dbReference type="InParanoid" id="Q9P749"/>
<dbReference type="OMA" id="QDRGDTF"/>
<dbReference type="OrthoDB" id="10264378at2759"/>
<dbReference type="Proteomes" id="UP000001805">
    <property type="component" value="Chromosome 2, Linkage Group V"/>
</dbReference>
<dbReference type="GO" id="GO:0005730">
    <property type="term" value="C:nucleolus"/>
    <property type="evidence" value="ECO:0000318"/>
    <property type="project" value="GO_Central"/>
</dbReference>
<dbReference type="GO" id="GO:0032040">
    <property type="term" value="C:small-subunit processome"/>
    <property type="evidence" value="ECO:0000318"/>
    <property type="project" value="GO_Central"/>
</dbReference>
<dbReference type="GO" id="GO:0019843">
    <property type="term" value="F:rRNA binding"/>
    <property type="evidence" value="ECO:0000318"/>
    <property type="project" value="GO_Central"/>
</dbReference>
<dbReference type="GO" id="GO:0034511">
    <property type="term" value="F:U3 snoRNA binding"/>
    <property type="evidence" value="ECO:0000318"/>
    <property type="project" value="GO_Central"/>
</dbReference>
<dbReference type="GO" id="GO:0000462">
    <property type="term" value="P:maturation of SSU-rRNA from tricistronic rRNA transcript (SSU-rRNA, 5.8S rRNA, LSU-rRNA)"/>
    <property type="evidence" value="ECO:0000318"/>
    <property type="project" value="GO_Central"/>
</dbReference>
<dbReference type="FunFam" id="3.40.50.300:FF:002356">
    <property type="entry name" value="U3 small nucleolar RNA-associated protein 25"/>
    <property type="match status" value="1"/>
</dbReference>
<dbReference type="Gene3D" id="3.40.50.300">
    <property type="entry name" value="P-loop containing nucleotide triphosphate hydrolases"/>
    <property type="match status" value="1"/>
</dbReference>
<dbReference type="InterPro" id="IPR027417">
    <property type="entry name" value="P-loop_NTPase"/>
</dbReference>
<dbReference type="InterPro" id="IPR010678">
    <property type="entry name" value="UTP25"/>
</dbReference>
<dbReference type="InterPro" id="IPR053939">
    <property type="entry name" value="UTP25_C"/>
</dbReference>
<dbReference type="InterPro" id="IPR053940">
    <property type="entry name" value="UTP25_NTPase-like"/>
</dbReference>
<dbReference type="PANTHER" id="PTHR12933">
    <property type="entry name" value="ORF PROTEIN-RELATED"/>
    <property type="match status" value="1"/>
</dbReference>
<dbReference type="PANTHER" id="PTHR12933:SF0">
    <property type="entry name" value="U3 SMALL NUCLEOLAR RNA-ASSOCIATED PROTEIN 25 HOMOLOG"/>
    <property type="match status" value="1"/>
</dbReference>
<dbReference type="Pfam" id="PF06862">
    <property type="entry name" value="Utp25_C"/>
    <property type="match status" value="1"/>
</dbReference>
<dbReference type="Pfam" id="PF22916">
    <property type="entry name" value="UTP25_NTPase-like"/>
    <property type="match status" value="1"/>
</dbReference>
<dbReference type="SUPFAM" id="SSF52540">
    <property type="entry name" value="P-loop containing nucleoside triphosphate hydrolases"/>
    <property type="match status" value="1"/>
</dbReference>
<sequence length="751" mass="85059">MAIRGRGGDRGGGGRGGGGRGRGGAGGFRGRGGSRGGGSRGGARGASRGRGRGSSRGGARGGFGPRSSKFNDARLADKDEEEDEEEDISEEESNVSEDEIEESEEEDEEEDAQSGQPYMSLLKSFQSATKTKKRKLDHPEEEGPNKVTKTKDDDNSDDEDNEKVTEDVDAVDEPEEDPQDAPLEDLFDEDDDLDDSDPFETHFTAPDEATFQARIKAIQANKWRTDRIAKNSNRIYYNTPETGDSAEQKLPHSISGVGDLKLKQRLAESMAKHTEFDEAEKAVAPLLFNYQDMLYCNRSVASSESIRRMACLHALNHVFKTRDRVIKNNTKLQRDDTLELRDQGFTRPKVLMILPTRQSCVKMVEMICKVAAPEQQENRKRFDDGYVDKSTKFSDDKPEDFRDLFAGNDDDMFRLGMKFTRKTIKYFSQFYNSDIIFASPLGLRMAIGSEEEKKKLDYDFLSSIELVIVDQADALLMQNWEHVEFIFEHLNLQPRDAHGCDFSRVRSWYLDDQAKYFRQTVIFSAFNTPELAELQRLYCHNWAGKARLQAEYPGVIQYLGVKTRQTFSRFDAASIAADPDARFAYFTKAIVPTLVKRAAKDAAGTLIFIPSYLDFVRVRNYFANNPAVESVTFGNISEYADTPEASRARSHFLTGRHRVLLYTERAHHFRRYAIKGVKRVIFYGLPDNPIFYREIAGGYLQKSEQALMLEHGQGHVKVMFSKYDIMKLERIVGTKRAGKMITEQGDTFDFV</sequence>
<comment type="function">
    <text evidence="1">DEAD-box RNA helicase-like protein required for pre-18S rRNA processing, specifically at sites A0, A1, and A2.</text>
</comment>
<comment type="subunit">
    <text evidence="1">Component of the ribosomal small subunit (SSU) processome composed of at least 40 protein subunits and snoRNA U3.</text>
</comment>
<comment type="subcellular location">
    <subcellularLocation>
        <location evidence="1">Nucleus</location>
        <location evidence="1">Nucleolus</location>
    </subcellularLocation>
</comment>
<comment type="similarity">
    <text evidence="3">Belongs to the UTP25 family.</text>
</comment>
<accession>Q9P749</accession>
<feature type="chain" id="PRO_0000408125" description="U3 small nucleolar RNA-associated protein 25">
    <location>
        <begin position="1"/>
        <end position="751"/>
    </location>
</feature>
<feature type="region of interest" description="Disordered" evidence="2">
    <location>
        <begin position="1"/>
        <end position="195"/>
    </location>
</feature>
<feature type="compositionally biased region" description="Gly residues" evidence="2">
    <location>
        <begin position="10"/>
        <end position="44"/>
    </location>
</feature>
<feature type="compositionally biased region" description="Gly residues" evidence="2">
    <location>
        <begin position="54"/>
        <end position="64"/>
    </location>
</feature>
<feature type="compositionally biased region" description="Acidic residues" evidence="2">
    <location>
        <begin position="78"/>
        <end position="112"/>
    </location>
</feature>
<feature type="compositionally biased region" description="Polar residues" evidence="2">
    <location>
        <begin position="113"/>
        <end position="129"/>
    </location>
</feature>
<feature type="compositionally biased region" description="Basic and acidic residues" evidence="2">
    <location>
        <begin position="137"/>
        <end position="153"/>
    </location>
</feature>
<feature type="compositionally biased region" description="Acidic residues" evidence="2">
    <location>
        <begin position="154"/>
        <end position="195"/>
    </location>
</feature>
<gene>
    <name type="primary">utp25</name>
    <name type="ORF">1A9.190</name>
    <name type="ORF">NCU01022</name>
</gene>